<keyword id="KW-0002">3D-structure</keyword>
<keyword id="KW-0024">Alternative initiation</keyword>
<keyword id="KW-0025">Alternative splicing</keyword>
<keyword id="KW-0378">Hydrolase</keyword>
<keyword id="KW-0479">Metal-binding</keyword>
<keyword id="KW-0507">mRNA processing</keyword>
<keyword id="KW-1185">Reference proteome</keyword>
<keyword id="KW-0677">Repeat</keyword>
<keyword id="KW-0691">RNA editing</keyword>
<keyword id="KW-0862">Zinc</keyword>
<comment type="function">
    <text evidence="7 8 9 11">Has A-to-I RNA editing activity on extended dsRNA: edits RNA-binding protein Rnp4F. A-to-I editing of pre-mRNAs acts predominantly through nervous system targets to affect adult nervous system integrity, function and behavior. Essential for adaptation to environmental stresses, such as oxygen deprivation, and for the prevention of premature neuronal degeneration, through the editing of ion channels as targets.</text>
</comment>
<comment type="alternative products">
    <event type="alternative splicing"/>
    <event type="alternative initiation"/>
    <isoform>
        <id>Q9NII1-1</id>
        <name evidence="7">C</name>
        <name evidence="13">b</name>
        <sequence type="displayed"/>
    </isoform>
    <isoform>
        <id>Q9NII1-2</id>
        <name evidence="7">A</name>
        <name evidence="13">a</name>
        <sequence type="described" ref="VSP_051651"/>
    </isoform>
    <isoform>
        <id>Q9NII1-3</id>
        <name evidence="12">B</name>
        <sequence type="described" ref="VSP_051649 VSP_051651"/>
    </isoform>
    <isoform>
        <id>Q9NII1-4</id>
        <name evidence="7">D</name>
        <sequence type="described" ref="VSP_051648"/>
    </isoform>
    <isoform>
        <id>Q9NII1-5</id>
        <name evidence="7">F</name>
        <sequence type="described" ref="VSP_051650"/>
    </isoform>
    <isoform>
        <id>Q9NII1-6</id>
        <name evidence="7">G</name>
        <sequence type="described" ref="VSP_051650 VSP_051651"/>
    </isoform>
    <isoform>
        <id>Q9NII1-7</id>
        <name>E</name>
        <sequence type="described" ref="VSP_018700"/>
    </isoform>
</comment>
<comment type="tissue specificity">
    <text evidence="7 8 14">Expressed in embryonic nervous system; late stage 13 sees ventral nerve cord expression which spreads to brain by stage 16. Expression is maintained through to adulthood.</text>
</comment>
<comment type="developmental stage">
    <text evidence="7">Expressed throughout development, highest expression is during pupal stage. Isoforms A, C and D have lowest expression levels.</text>
</comment>
<comment type="RNA editing">
    <location>
        <position position="437" evidence="7"/>
    </location>
    <text evidence="7">Partially edited. Editing is low in embryos and pupae and increases dramatically upon eclosion.</text>
</comment>
<comment type="disruption phenotype">
    <text evidence="8">Adult flies are morphologically wild-type but exhibit extreme behavioral defects including temperature-sensitive paralysis, locomotor uncoordination, and tremors which increase in severity with age.</text>
</comment>
<comment type="miscellaneous">
    <molecule>Isoform E</molecule>
    <text evidence="15">Produced by alternative initiation at Met-8 of isoform C.</text>
</comment>
<comment type="sequence caution" evidence="15">
    <conflict type="miscellaneous discrepancy">
        <sequence resource="EMBL-CDS" id="AAM50022"/>
    </conflict>
    <text>Intron retention.</text>
</comment>
<evidence type="ECO:0000250" key="1">
    <source>
        <dbReference type="UniProtKB" id="P78563"/>
    </source>
</evidence>
<evidence type="ECO:0000255" key="2">
    <source>
        <dbReference type="PROSITE-ProRule" id="PRU00240"/>
    </source>
</evidence>
<evidence type="ECO:0000255" key="3">
    <source>
        <dbReference type="PROSITE-ProRule" id="PRU00266"/>
    </source>
</evidence>
<evidence type="ECO:0000256" key="4">
    <source>
        <dbReference type="SAM" id="MobiDB-lite"/>
    </source>
</evidence>
<evidence type="ECO:0000269" key="5">
    <source>
    </source>
</evidence>
<evidence type="ECO:0000269" key="6">
    <source>
    </source>
</evidence>
<evidence type="ECO:0000269" key="7">
    <source>
    </source>
</evidence>
<evidence type="ECO:0000269" key="8">
    <source>
    </source>
</evidence>
<evidence type="ECO:0000269" key="9">
    <source>
    </source>
</evidence>
<evidence type="ECO:0000269" key="10">
    <source>
    </source>
</evidence>
<evidence type="ECO:0000269" key="11">
    <source>
    </source>
</evidence>
<evidence type="ECO:0000303" key="12">
    <source>
    </source>
</evidence>
<evidence type="ECO:0000303" key="13">
    <source>
    </source>
</evidence>
<evidence type="ECO:0000303" key="14">
    <source>
    </source>
</evidence>
<evidence type="ECO:0000305" key="15"/>
<evidence type="ECO:0000312" key="16">
    <source>
        <dbReference type="EMBL" id="AAF45665.2"/>
    </source>
</evidence>
<evidence type="ECO:0000312" key="17">
    <source>
        <dbReference type="EMBL" id="AAF63702.1"/>
    </source>
</evidence>
<evidence type="ECO:0000312" key="18">
    <source>
        <dbReference type="EMBL" id="AAK26850.1"/>
    </source>
</evidence>
<evidence type="ECO:0000312" key="19">
    <source>
        <dbReference type="EMBL" id="AAM50022.1"/>
    </source>
</evidence>
<evidence type="ECO:0000312" key="20">
    <source>
        <dbReference type="EMBL" id="CAA22774.1"/>
    </source>
</evidence>
<evidence type="ECO:0007829" key="21">
    <source>
        <dbReference type="PDB" id="2LJH"/>
    </source>
</evidence>
<dbReference type="EC" id="3.5.-.-"/>
<dbReference type="EMBL" id="AF208535">
    <property type="protein sequence ID" value="AAF63702.1"/>
    <property type="molecule type" value="Genomic_DNA"/>
</dbReference>
<dbReference type="EMBL" id="AF208535">
    <property type="protein sequence ID" value="AAF63703.1"/>
    <property type="molecule type" value="Genomic_DNA"/>
</dbReference>
<dbReference type="EMBL" id="AF343579">
    <property type="protein sequence ID" value="AAK26850.1"/>
    <property type="molecule type" value="mRNA"/>
</dbReference>
<dbReference type="EMBL" id="AE014298">
    <property type="protein sequence ID" value="AAF45665.2"/>
    <property type="molecule type" value="Genomic_DNA"/>
</dbReference>
<dbReference type="EMBL" id="AE014298">
    <property type="protein sequence ID" value="AAN09057.2"/>
    <property type="molecule type" value="Genomic_DNA"/>
</dbReference>
<dbReference type="EMBL" id="AL035207">
    <property type="protein sequence ID" value="CAA22774.1"/>
    <property type="molecule type" value="Genomic_DNA"/>
</dbReference>
<dbReference type="EMBL" id="AY118653">
    <property type="protein sequence ID" value="AAM50022.1"/>
    <property type="status" value="ALT_SEQ"/>
    <property type="molecule type" value="mRNA"/>
</dbReference>
<dbReference type="RefSeq" id="NP_001245469.1">
    <property type="nucleotide sequence ID" value="NM_001258540.1"/>
</dbReference>
<dbReference type="RefSeq" id="NP_001245477.1">
    <molecule id="Q9NII1-6"/>
    <property type="nucleotide sequence ID" value="NM_001258548.2"/>
</dbReference>
<dbReference type="RefSeq" id="NP_001284791.1">
    <molecule id="Q9NII1-7"/>
    <property type="nucleotide sequence ID" value="NM_001297862.1"/>
</dbReference>
<dbReference type="RefSeq" id="NP_569940.2">
    <property type="nucleotide sequence ID" value="NM_130584.4"/>
</dbReference>
<dbReference type="RefSeq" id="NP_726761.2">
    <molecule id="Q9NII1-3"/>
    <property type="nucleotide sequence ID" value="NM_166903.3"/>
</dbReference>
<dbReference type="PDB" id="2LJH">
    <property type="method" value="NMR"/>
    <property type="chains" value="A=48-140"/>
</dbReference>
<dbReference type="PDBsum" id="2LJH"/>
<dbReference type="BMRB" id="Q9NII1"/>
<dbReference type="SMR" id="Q9NII1"/>
<dbReference type="BioGRID" id="57679">
    <property type="interactions" value="8"/>
</dbReference>
<dbReference type="FunCoup" id="Q9NII1">
    <property type="interactions" value="1297"/>
</dbReference>
<dbReference type="IntAct" id="Q9NII1">
    <property type="interactions" value="1"/>
</dbReference>
<dbReference type="STRING" id="7227.FBpp0308381"/>
<dbReference type="PaxDb" id="7227-FBpp0300329"/>
<dbReference type="DNASU" id="31130"/>
<dbReference type="EnsemblMetazoa" id="FBtr0070300">
    <molecule id="Q9NII1-3"/>
    <property type="protein sequence ID" value="FBpp0070287"/>
    <property type="gene ID" value="FBgn0026086"/>
</dbReference>
<dbReference type="EnsemblMetazoa" id="FBtr0305499">
    <molecule id="Q9NII1-6"/>
    <property type="protein sequence ID" value="FBpp0293951"/>
    <property type="gene ID" value="FBgn0026086"/>
</dbReference>
<dbReference type="EnsemblMetazoa" id="FBtr0339272">
    <molecule id="Q9NII1-7"/>
    <property type="protein sequence ID" value="FBpp0308381"/>
    <property type="gene ID" value="FBgn0026086"/>
</dbReference>
<dbReference type="GeneID" id="31130"/>
<dbReference type="KEGG" id="dme:Dmel_CG12598"/>
<dbReference type="AGR" id="FB:FBgn0026086"/>
<dbReference type="CTD" id="103"/>
<dbReference type="FlyBase" id="FBgn0026086">
    <property type="gene designation" value="Adar"/>
</dbReference>
<dbReference type="VEuPathDB" id="VectorBase:FBgn0026086"/>
<dbReference type="eggNOG" id="KOG2777">
    <property type="taxonomic scope" value="Eukaryota"/>
</dbReference>
<dbReference type="GeneTree" id="ENSGT00940000168020"/>
<dbReference type="InParanoid" id="Q9NII1"/>
<dbReference type="OrthoDB" id="10268011at2759"/>
<dbReference type="PhylomeDB" id="Q9NII1"/>
<dbReference type="BRENDA" id="3.5.4.37">
    <property type="organism ID" value="1994"/>
</dbReference>
<dbReference type="Reactome" id="R-DME-75102">
    <property type="pathway name" value="C6 deamination of adenosine"/>
</dbReference>
<dbReference type="Reactome" id="R-DME-77042">
    <property type="pathway name" value="Formation of editosomes by ADAR proteins"/>
</dbReference>
<dbReference type="BioGRID-ORCS" id="31130">
    <property type="hits" value="0 hits in 3 CRISPR screens"/>
</dbReference>
<dbReference type="EvolutionaryTrace" id="Q9NII1"/>
<dbReference type="GenomeRNAi" id="31130"/>
<dbReference type="PRO" id="PR:Q9NII1"/>
<dbReference type="Proteomes" id="UP000000803">
    <property type="component" value="Chromosome X"/>
</dbReference>
<dbReference type="Bgee" id="FBgn0026086">
    <property type="expression patterns" value="Expressed in lamina monopolar neuron L2 (Drosophila) in insect head and 277 other cell types or tissues"/>
</dbReference>
<dbReference type="ExpressionAtlas" id="Q9NII1">
    <property type="expression patterns" value="baseline and differential"/>
</dbReference>
<dbReference type="GO" id="GO:0005737">
    <property type="term" value="C:cytoplasm"/>
    <property type="evidence" value="ECO:0000318"/>
    <property type="project" value="GO_Central"/>
</dbReference>
<dbReference type="GO" id="GO:0005730">
    <property type="term" value="C:nucleolus"/>
    <property type="evidence" value="ECO:0000314"/>
    <property type="project" value="FlyBase"/>
</dbReference>
<dbReference type="GO" id="GO:0005634">
    <property type="term" value="C:nucleus"/>
    <property type="evidence" value="ECO:0007005"/>
    <property type="project" value="FlyBase"/>
</dbReference>
<dbReference type="GO" id="GO:0003726">
    <property type="term" value="F:double-stranded RNA adenosine deaminase activity"/>
    <property type="evidence" value="ECO:0000314"/>
    <property type="project" value="FlyBase"/>
</dbReference>
<dbReference type="GO" id="GO:0003725">
    <property type="term" value="F:double-stranded RNA binding"/>
    <property type="evidence" value="ECO:0000318"/>
    <property type="project" value="GO_Central"/>
</dbReference>
<dbReference type="GO" id="GO:0046872">
    <property type="term" value="F:metal ion binding"/>
    <property type="evidence" value="ECO:0007669"/>
    <property type="project" value="UniProtKB-KW"/>
</dbReference>
<dbReference type="GO" id="GO:0008251">
    <property type="term" value="F:tRNA-specific adenosine deaminase activity"/>
    <property type="evidence" value="ECO:0000318"/>
    <property type="project" value="GO_Central"/>
</dbReference>
<dbReference type="GO" id="GO:0006382">
    <property type="term" value="P:adenosine to inosine editing"/>
    <property type="evidence" value="ECO:0000314"/>
    <property type="project" value="UniProtKB"/>
</dbReference>
<dbReference type="GO" id="GO:0030534">
    <property type="term" value="P:adult behavior"/>
    <property type="evidence" value="ECO:0000315"/>
    <property type="project" value="FlyBase"/>
</dbReference>
<dbReference type="GO" id="GO:0008344">
    <property type="term" value="P:adult locomotory behavior"/>
    <property type="evidence" value="ECO:0000315"/>
    <property type="project" value="FlyBase"/>
</dbReference>
<dbReference type="GO" id="GO:0045475">
    <property type="term" value="P:locomotor rhythm"/>
    <property type="evidence" value="ECO:0000315"/>
    <property type="project" value="FlyBase"/>
</dbReference>
<dbReference type="GO" id="GO:0007626">
    <property type="term" value="P:locomotory behavior"/>
    <property type="evidence" value="ECO:0000315"/>
    <property type="project" value="FlyBase"/>
</dbReference>
<dbReference type="GO" id="GO:0008049">
    <property type="term" value="P:male courtship behavior"/>
    <property type="evidence" value="ECO:0000315"/>
    <property type="project" value="FlyBase"/>
</dbReference>
<dbReference type="GO" id="GO:0016556">
    <property type="term" value="P:mRNA modification"/>
    <property type="evidence" value="ECO:0000314"/>
    <property type="project" value="FlyBase"/>
</dbReference>
<dbReference type="GO" id="GO:0006397">
    <property type="term" value="P:mRNA processing"/>
    <property type="evidence" value="ECO:0007669"/>
    <property type="project" value="UniProtKB-KW"/>
</dbReference>
<dbReference type="GO" id="GO:0030514">
    <property type="term" value="P:negative regulation of BMP signaling pathway"/>
    <property type="evidence" value="ECO:0000315"/>
    <property type="project" value="FlyBase"/>
</dbReference>
<dbReference type="GO" id="GO:0010608">
    <property type="term" value="P:post-transcriptional regulation of gene expression"/>
    <property type="evidence" value="ECO:0000315"/>
    <property type="project" value="FlyBase"/>
</dbReference>
<dbReference type="GO" id="GO:0042752">
    <property type="term" value="P:regulation of circadian rhythm"/>
    <property type="evidence" value="ECO:0000314"/>
    <property type="project" value="FlyBase"/>
</dbReference>
<dbReference type="GO" id="GO:0042391">
    <property type="term" value="P:regulation of membrane potential"/>
    <property type="evidence" value="ECO:0000315"/>
    <property type="project" value="FlyBase"/>
</dbReference>
<dbReference type="GO" id="GO:0009408">
    <property type="term" value="P:response to heat"/>
    <property type="evidence" value="ECO:0000315"/>
    <property type="project" value="FlyBase"/>
</dbReference>
<dbReference type="GO" id="GO:0001666">
    <property type="term" value="P:response to hypoxia"/>
    <property type="evidence" value="ECO:0000315"/>
    <property type="project" value="FlyBase"/>
</dbReference>
<dbReference type="GO" id="GO:0006979">
    <property type="term" value="P:response to oxidative stress"/>
    <property type="evidence" value="ECO:0000315"/>
    <property type="project" value="UniProtKB"/>
</dbReference>
<dbReference type="GO" id="GO:0009451">
    <property type="term" value="P:RNA modification"/>
    <property type="evidence" value="ECO:0000314"/>
    <property type="project" value="FlyBase"/>
</dbReference>
<dbReference type="GO" id="GO:0006396">
    <property type="term" value="P:RNA processing"/>
    <property type="evidence" value="ECO:0000318"/>
    <property type="project" value="GO_Central"/>
</dbReference>
<dbReference type="GO" id="GO:0007283">
    <property type="term" value="P:spermatogenesis"/>
    <property type="evidence" value="ECO:0000270"/>
    <property type="project" value="FlyBase"/>
</dbReference>
<dbReference type="CDD" id="cd19865">
    <property type="entry name" value="DSRM_STRBP_RED-like_rpt1"/>
    <property type="match status" value="1"/>
</dbReference>
<dbReference type="FunFam" id="3.30.160.20:FF:000044">
    <property type="entry name" value="Uncharacterized protein, isoform I"/>
    <property type="match status" value="1"/>
</dbReference>
<dbReference type="FunFam" id="3.30.160.20:FF:000049">
    <property type="entry name" value="Uncharacterized protein, isoform I"/>
    <property type="match status" value="1"/>
</dbReference>
<dbReference type="Gene3D" id="3.30.160.20">
    <property type="match status" value="2"/>
</dbReference>
<dbReference type="InterPro" id="IPR002466">
    <property type="entry name" value="A_deamin"/>
</dbReference>
<dbReference type="InterPro" id="IPR014720">
    <property type="entry name" value="dsRBD_dom"/>
</dbReference>
<dbReference type="PANTHER" id="PTHR10910:SF62">
    <property type="entry name" value="AT07585P-RELATED"/>
    <property type="match status" value="1"/>
</dbReference>
<dbReference type="PANTHER" id="PTHR10910">
    <property type="entry name" value="EUKARYOTE SPECIFIC DSRNA BINDING PROTEIN"/>
    <property type="match status" value="1"/>
</dbReference>
<dbReference type="Pfam" id="PF02137">
    <property type="entry name" value="A_deamin"/>
    <property type="match status" value="1"/>
</dbReference>
<dbReference type="Pfam" id="PF00035">
    <property type="entry name" value="dsrm"/>
    <property type="match status" value="2"/>
</dbReference>
<dbReference type="SMART" id="SM00552">
    <property type="entry name" value="ADEAMc"/>
    <property type="match status" value="1"/>
</dbReference>
<dbReference type="SMART" id="SM00358">
    <property type="entry name" value="DSRM"/>
    <property type="match status" value="2"/>
</dbReference>
<dbReference type="SUPFAM" id="SSF54768">
    <property type="entry name" value="dsRNA-binding domain-like"/>
    <property type="match status" value="2"/>
</dbReference>
<dbReference type="PROSITE" id="PS50141">
    <property type="entry name" value="A_DEAMIN_EDITASE"/>
    <property type="match status" value="1"/>
</dbReference>
<dbReference type="PROSITE" id="PS50137">
    <property type="entry name" value="DS_RBD"/>
    <property type="match status" value="2"/>
</dbReference>
<reference evidence="15 17" key="1">
    <citation type="journal article" date="2000" name="RNA">
        <title>dADAR, a Drosophila double-stranded RNA-specific adenosine deaminase is highly developmentally regulated and is itself a target for RNA editing.</title>
        <authorList>
            <person name="Palladino M.J."/>
            <person name="Keegan L.P."/>
            <person name="O'Connell M.A."/>
            <person name="Reenan R.A."/>
        </authorList>
    </citation>
    <scope>NUCLEOTIDE SEQUENCE [GENOMIC DNA] (ISOFORMS A; C; D; E; F AND G)</scope>
    <scope>FUNCTION</scope>
    <scope>TISSUE SPECIFICITY</scope>
    <scope>DEVELOPMENTAL STAGE</scope>
    <scope>RNA EDITING OF POSITION 437</scope>
    <source>
        <strain evidence="17">Canton-S</strain>
    </source>
</reference>
<reference evidence="15 18" key="2">
    <citation type="journal article" date="2001" name="J. Clin. Invest.">
        <title>Mutation in pre-mRNA adenosine deaminase markedly attenuates neuronal tolerance to O(2) deprivation in Drosophila melanogaster.</title>
        <authorList>
            <person name="Ma E."/>
            <person name="Gu X.-Q."/>
            <person name="Wu X."/>
            <person name="Xu T."/>
            <person name="Haddad G.G."/>
        </authorList>
    </citation>
    <scope>NUCLEOTIDE SEQUENCE [MRNA] (ISOFORM A)</scope>
    <scope>FUNCTION</scope>
    <scope>TISSUE SPECIFICITY</scope>
</reference>
<reference evidence="15 16" key="3">
    <citation type="journal article" date="2000" name="Science">
        <title>The genome sequence of Drosophila melanogaster.</title>
        <authorList>
            <person name="Adams M.D."/>
            <person name="Celniker S.E."/>
            <person name="Holt R.A."/>
            <person name="Evans C.A."/>
            <person name="Gocayne J.D."/>
            <person name="Amanatides P.G."/>
            <person name="Scherer S.E."/>
            <person name="Li P.W."/>
            <person name="Hoskins R.A."/>
            <person name="Galle R.F."/>
            <person name="George R.A."/>
            <person name="Lewis S.E."/>
            <person name="Richards S."/>
            <person name="Ashburner M."/>
            <person name="Henderson S.N."/>
            <person name="Sutton G.G."/>
            <person name="Wortman J.R."/>
            <person name="Yandell M.D."/>
            <person name="Zhang Q."/>
            <person name="Chen L.X."/>
            <person name="Brandon R.C."/>
            <person name="Rogers Y.-H.C."/>
            <person name="Blazej R.G."/>
            <person name="Champe M."/>
            <person name="Pfeiffer B.D."/>
            <person name="Wan K.H."/>
            <person name="Doyle C."/>
            <person name="Baxter E.G."/>
            <person name="Helt G."/>
            <person name="Nelson C.R."/>
            <person name="Miklos G.L.G."/>
            <person name="Abril J.F."/>
            <person name="Agbayani A."/>
            <person name="An H.-J."/>
            <person name="Andrews-Pfannkoch C."/>
            <person name="Baldwin D."/>
            <person name="Ballew R.M."/>
            <person name="Basu A."/>
            <person name="Baxendale J."/>
            <person name="Bayraktaroglu L."/>
            <person name="Beasley E.M."/>
            <person name="Beeson K.Y."/>
            <person name="Benos P.V."/>
            <person name="Berman B.P."/>
            <person name="Bhandari D."/>
            <person name="Bolshakov S."/>
            <person name="Borkova D."/>
            <person name="Botchan M.R."/>
            <person name="Bouck J."/>
            <person name="Brokstein P."/>
            <person name="Brottier P."/>
            <person name="Burtis K.C."/>
            <person name="Busam D.A."/>
            <person name="Butler H."/>
            <person name="Cadieu E."/>
            <person name="Center A."/>
            <person name="Chandra I."/>
            <person name="Cherry J.M."/>
            <person name="Cawley S."/>
            <person name="Dahlke C."/>
            <person name="Davenport L.B."/>
            <person name="Davies P."/>
            <person name="de Pablos B."/>
            <person name="Delcher A."/>
            <person name="Deng Z."/>
            <person name="Mays A.D."/>
            <person name="Dew I."/>
            <person name="Dietz S.M."/>
            <person name="Dodson K."/>
            <person name="Doup L.E."/>
            <person name="Downes M."/>
            <person name="Dugan-Rocha S."/>
            <person name="Dunkov B.C."/>
            <person name="Dunn P."/>
            <person name="Durbin K.J."/>
            <person name="Evangelista C.C."/>
            <person name="Ferraz C."/>
            <person name="Ferriera S."/>
            <person name="Fleischmann W."/>
            <person name="Fosler C."/>
            <person name="Gabrielian A.E."/>
            <person name="Garg N.S."/>
            <person name="Gelbart W.M."/>
            <person name="Glasser K."/>
            <person name="Glodek A."/>
            <person name="Gong F."/>
            <person name="Gorrell J.H."/>
            <person name="Gu Z."/>
            <person name="Guan P."/>
            <person name="Harris M."/>
            <person name="Harris N.L."/>
            <person name="Harvey D.A."/>
            <person name="Heiman T.J."/>
            <person name="Hernandez J.R."/>
            <person name="Houck J."/>
            <person name="Hostin D."/>
            <person name="Houston K.A."/>
            <person name="Howland T.J."/>
            <person name="Wei M.-H."/>
            <person name="Ibegwam C."/>
            <person name="Jalali M."/>
            <person name="Kalush F."/>
            <person name="Karpen G.H."/>
            <person name="Ke Z."/>
            <person name="Kennison J.A."/>
            <person name="Ketchum K.A."/>
            <person name="Kimmel B.E."/>
            <person name="Kodira C.D."/>
            <person name="Kraft C.L."/>
            <person name="Kravitz S."/>
            <person name="Kulp D."/>
            <person name="Lai Z."/>
            <person name="Lasko P."/>
            <person name="Lei Y."/>
            <person name="Levitsky A.A."/>
            <person name="Li J.H."/>
            <person name="Li Z."/>
            <person name="Liang Y."/>
            <person name="Lin X."/>
            <person name="Liu X."/>
            <person name="Mattei B."/>
            <person name="McIntosh T.C."/>
            <person name="McLeod M.P."/>
            <person name="McPherson D."/>
            <person name="Merkulov G."/>
            <person name="Milshina N.V."/>
            <person name="Mobarry C."/>
            <person name="Morris J."/>
            <person name="Moshrefi A."/>
            <person name="Mount S.M."/>
            <person name="Moy M."/>
            <person name="Murphy B."/>
            <person name="Murphy L."/>
            <person name="Muzny D.M."/>
            <person name="Nelson D.L."/>
            <person name="Nelson D.R."/>
            <person name="Nelson K.A."/>
            <person name="Nixon K."/>
            <person name="Nusskern D.R."/>
            <person name="Pacleb J.M."/>
            <person name="Palazzolo M."/>
            <person name="Pittman G.S."/>
            <person name="Pan S."/>
            <person name="Pollard J."/>
            <person name="Puri V."/>
            <person name="Reese M.G."/>
            <person name="Reinert K."/>
            <person name="Remington K."/>
            <person name="Saunders R.D.C."/>
            <person name="Scheeler F."/>
            <person name="Shen H."/>
            <person name="Shue B.C."/>
            <person name="Siden-Kiamos I."/>
            <person name="Simpson M."/>
            <person name="Skupski M.P."/>
            <person name="Smith T.J."/>
            <person name="Spier E."/>
            <person name="Spradling A.C."/>
            <person name="Stapleton M."/>
            <person name="Strong R."/>
            <person name="Sun E."/>
            <person name="Svirskas R."/>
            <person name="Tector C."/>
            <person name="Turner R."/>
            <person name="Venter E."/>
            <person name="Wang A.H."/>
            <person name="Wang X."/>
            <person name="Wang Z.-Y."/>
            <person name="Wassarman D.A."/>
            <person name="Weinstock G.M."/>
            <person name="Weissenbach J."/>
            <person name="Williams S.M."/>
            <person name="Woodage T."/>
            <person name="Worley K.C."/>
            <person name="Wu D."/>
            <person name="Yang S."/>
            <person name="Yao Q.A."/>
            <person name="Ye J."/>
            <person name="Yeh R.-F."/>
            <person name="Zaveri J.S."/>
            <person name="Zhan M."/>
            <person name="Zhang G."/>
            <person name="Zhao Q."/>
            <person name="Zheng L."/>
            <person name="Zheng X.H."/>
            <person name="Zhong F.N."/>
            <person name="Zhong W."/>
            <person name="Zhou X."/>
            <person name="Zhu S.C."/>
            <person name="Zhu X."/>
            <person name="Smith H.O."/>
            <person name="Gibbs R.A."/>
            <person name="Myers E.W."/>
            <person name="Rubin G.M."/>
            <person name="Venter J.C."/>
        </authorList>
    </citation>
    <scope>NUCLEOTIDE SEQUENCE [LARGE SCALE GENOMIC DNA]</scope>
    <source>
        <strain evidence="5">Berkeley</strain>
    </source>
</reference>
<reference evidence="15 16" key="4">
    <citation type="journal article" date="2002" name="Genome Biol.">
        <title>Annotation of the Drosophila melanogaster euchromatic genome: a systematic review.</title>
        <authorList>
            <person name="Misra S."/>
            <person name="Crosby M.A."/>
            <person name="Mungall C.J."/>
            <person name="Matthews B.B."/>
            <person name="Campbell K.S."/>
            <person name="Hradecky P."/>
            <person name="Huang Y."/>
            <person name="Kaminker J.S."/>
            <person name="Millburn G.H."/>
            <person name="Prochnik S.E."/>
            <person name="Smith C.D."/>
            <person name="Tupy J.L."/>
            <person name="Whitfield E.J."/>
            <person name="Bayraktaroglu L."/>
            <person name="Berman B.P."/>
            <person name="Bettencourt B.R."/>
            <person name="Celniker S.E."/>
            <person name="de Grey A.D.N.J."/>
            <person name="Drysdale R.A."/>
            <person name="Harris N.L."/>
            <person name="Richter J."/>
            <person name="Russo S."/>
            <person name="Schroeder A.J."/>
            <person name="Shu S.Q."/>
            <person name="Stapleton M."/>
            <person name="Yamada C."/>
            <person name="Ashburner M."/>
            <person name="Gelbart W.M."/>
            <person name="Rubin G.M."/>
            <person name="Lewis S.E."/>
        </authorList>
    </citation>
    <scope>GENOME REANNOTATION</scope>
    <scope>ALTERNATIVE SPLICING</scope>
    <source>
        <strain>Berkeley</strain>
    </source>
</reference>
<reference evidence="15 20" key="5">
    <citation type="journal article" date="2000" name="Science">
        <title>From sequence to chromosome: the tip of the X chromosome of D. melanogaster.</title>
        <authorList>
            <person name="Benos P.V."/>
            <person name="Gatt M.K."/>
            <person name="Ashburner M."/>
            <person name="Murphy L."/>
            <person name="Harris D."/>
            <person name="Barrell B.G."/>
            <person name="Ferraz C."/>
            <person name="Vidal S."/>
            <person name="Brun C."/>
            <person name="Demailles J."/>
            <person name="Cadieu E."/>
            <person name="Dreano S."/>
            <person name="Gloux S."/>
            <person name="Lelaure V."/>
            <person name="Mottier S."/>
            <person name="Galibert F."/>
            <person name="Borkova D."/>
            <person name="Minana B."/>
            <person name="Kafatos F.C."/>
            <person name="Louis C."/>
            <person name="Siden-Kiamos I."/>
            <person name="Bolshakov S."/>
            <person name="Papagiannakis G."/>
            <person name="Spanos L."/>
            <person name="Cox S."/>
            <person name="Madueno E."/>
            <person name="de Pablos B."/>
            <person name="Modolell J."/>
            <person name="Peter A."/>
            <person name="Schoettler P."/>
            <person name="Werner M."/>
            <person name="Mourkioti F."/>
            <person name="Beinert N."/>
            <person name="Dowe G."/>
            <person name="Schaefer U."/>
            <person name="Jaeckle H."/>
            <person name="Bucheton A."/>
            <person name="Callister D.M."/>
            <person name="Campbell L.A."/>
            <person name="Darlamitsou A."/>
            <person name="Henderson N.S."/>
            <person name="McMillan P.J."/>
            <person name="Salles C."/>
            <person name="Tait E.A."/>
            <person name="Valenti P."/>
            <person name="Saunders R.D.C."/>
            <person name="Glover D.M."/>
        </authorList>
    </citation>
    <scope>NUCLEOTIDE SEQUENCE [LARGE SCALE GENOMIC DNA]</scope>
    <source>
        <strain evidence="6">Oregon-R</strain>
    </source>
</reference>
<reference evidence="15 19" key="6">
    <citation type="journal article" date="2002" name="Genome Biol.">
        <title>A Drosophila full-length cDNA resource.</title>
        <authorList>
            <person name="Stapleton M."/>
            <person name="Carlson J.W."/>
            <person name="Brokstein P."/>
            <person name="Yu C."/>
            <person name="Champe M."/>
            <person name="George R.A."/>
            <person name="Guarin H."/>
            <person name="Kronmiller B."/>
            <person name="Pacleb J.M."/>
            <person name="Park S."/>
            <person name="Wan K.H."/>
            <person name="Rubin G.M."/>
            <person name="Celniker S.E."/>
        </authorList>
    </citation>
    <scope>NUCLEOTIDE SEQUENCE [LARGE SCALE MRNA]</scope>
    <source>
        <strain evidence="10">Berkeley</strain>
        <tissue evidence="10">Embryo</tissue>
    </source>
</reference>
<reference evidence="15" key="7">
    <citation type="journal article" date="2000" name="Cell">
        <title>A-to-I pre-mRNA editing in Drosophila is primarily involved in adult nervous system function and integrity.</title>
        <authorList>
            <person name="Palladino M.J."/>
            <person name="Keegan L.P."/>
            <person name="O'Connell M.A."/>
            <person name="Reenan R.A."/>
        </authorList>
    </citation>
    <scope>FUNCTION</scope>
    <scope>TISSUE SPECIFICITY</scope>
    <scope>DISRUPTION PHENOTYPE</scope>
</reference>
<reference evidence="15" key="8">
    <citation type="journal article" date="2003" name="RNA">
        <title>RNA editing and regulation of Drosophila 4f-rnp expression by sas-10 antisense readthrough mRNA transcripts.</title>
        <authorList>
            <person name="Peters N.T."/>
            <person name="Rohrbach J.A."/>
            <person name="Zalewski B.A."/>
            <person name="Byrkett C.M."/>
            <person name="Vaughn J.C."/>
        </authorList>
    </citation>
    <scope>FUNCTION</scope>
</reference>
<gene>
    <name evidence="17" type="primary">Adar</name>
    <name evidence="14" type="synonym">hypnos-2</name>
    <name type="ORF">CG12598</name>
</gene>
<feature type="chain" id="PRO_0000004790" description="Double-stranded RNA-specific editase Adar">
    <location>
        <begin position="1"/>
        <end position="676"/>
    </location>
</feature>
<feature type="domain" description="DRBM 1" evidence="3">
    <location>
        <begin position="61"/>
        <end position="127"/>
    </location>
</feature>
<feature type="domain" description="DRBM 2" evidence="3">
    <location>
        <begin position="197"/>
        <end position="272"/>
    </location>
</feature>
<feature type="domain" description="A to I editase" evidence="2">
    <location>
        <begin position="348"/>
        <end position="672"/>
    </location>
</feature>
<feature type="region of interest" description="Disordered" evidence="4">
    <location>
        <begin position="1"/>
        <end position="51"/>
    </location>
</feature>
<feature type="compositionally biased region" description="Polar residues" evidence="4">
    <location>
        <begin position="8"/>
        <end position="31"/>
    </location>
</feature>
<feature type="compositionally biased region" description="Basic and acidic residues" evidence="4">
    <location>
        <begin position="40"/>
        <end position="51"/>
    </location>
</feature>
<feature type="active site" description="Proton donor" evidence="2">
    <location>
        <position position="374"/>
    </location>
</feature>
<feature type="binding site" evidence="1 2">
    <location>
        <position position="372"/>
    </location>
    <ligand>
        <name>Zn(2+)</name>
        <dbReference type="ChEBI" id="CHEBI:29105"/>
    </ligand>
</feature>
<feature type="binding site" evidence="1 2">
    <location>
        <position position="430"/>
    </location>
    <ligand>
        <name>Zn(2+)</name>
        <dbReference type="ChEBI" id="CHEBI:29105"/>
    </ligand>
</feature>
<feature type="binding site" evidence="1 2">
    <location>
        <position position="493"/>
    </location>
    <ligand>
        <name>Zn(2+)</name>
        <dbReference type="ChEBI" id="CHEBI:29105"/>
    </ligand>
</feature>
<feature type="splice variant" id="VSP_051650" description="In isoform F and isoform G." evidence="13">
    <location>
        <begin position="1"/>
        <end position="28"/>
    </location>
</feature>
<feature type="splice variant" id="VSP_051649" description="In isoform B." evidence="12">
    <original>MKFDSRVMLNSANNNSPQH</original>
    <variation>MTLCRYSE</variation>
    <location>
        <begin position="1"/>
        <end position="19"/>
    </location>
</feature>
<feature type="splice variant" id="VSP_051648" description="In isoform D." evidence="13">
    <original>MKFDSRVMLNSANNNSPQH</original>
    <variation>MKFECFSLYCTVLK</variation>
    <location>
        <begin position="1"/>
        <end position="19"/>
    </location>
</feature>
<feature type="splice variant" id="VSP_018700" description="In isoform E." evidence="15">
    <location>
        <begin position="1"/>
        <end position="7"/>
    </location>
</feature>
<feature type="splice variant" id="VSP_051651" description="In isoform A, isoform B and isoform G." evidence="12 13 14">
    <original>GIENLSSSKMFEIIQTMLTEKLSNPTSLEQPTFCMSQN</original>
    <variation>D</variation>
    <location>
        <begin position="154"/>
        <end position="191"/>
    </location>
</feature>
<feature type="sequence variant" description="In RNA edited version." evidence="7">
    <original>S</original>
    <variation>G</variation>
    <location>
        <position position="437"/>
    </location>
</feature>
<feature type="sequence conflict" description="In Ref. 5; CAA22774." evidence="15" ref="5">
    <original>V</original>
    <variation>VSPQPAKHCETNYNAKPILDQV</variation>
    <location>
        <position position="346"/>
    </location>
</feature>
<feature type="helix" evidence="21">
    <location>
        <begin position="65"/>
        <end position="72"/>
    </location>
</feature>
<feature type="strand" evidence="21">
    <location>
        <begin position="77"/>
        <end position="84"/>
    </location>
</feature>
<feature type="strand" evidence="21">
    <location>
        <begin position="87"/>
        <end position="89"/>
    </location>
</feature>
<feature type="strand" evidence="21">
    <location>
        <begin position="91"/>
        <end position="98"/>
    </location>
</feature>
<feature type="strand" evidence="21">
    <location>
        <begin position="101"/>
        <end position="109"/>
    </location>
</feature>
<feature type="helix" evidence="21">
    <location>
        <begin position="110"/>
        <end position="125"/>
    </location>
</feature>
<name>ADAR_DROME</name>
<accession>Q9NII1</accession>
<accession>O96834</accession>
<accession>Q8IRX2</accession>
<accession>Q8MSQ9</accession>
<accession>Q9BJ37</accession>
<accession>Q9NII2</accession>
<accession>Q9W562</accession>
<proteinExistence type="evidence at protein level"/>
<protein>
    <recommendedName>
        <fullName>Double-stranded RNA-specific editase Adar</fullName>
        <ecNumber>3.5.-.-</ecNumber>
    </recommendedName>
    <alternativeName>
        <fullName>Adenosine deaminase that act on RNA</fullName>
    </alternativeName>
    <alternativeName>
        <fullName>Pre-mRNA adenosine deaminase</fullName>
    </alternativeName>
    <alternativeName>
        <fullName>RNA-editing deaminase 1</fullName>
    </alternativeName>
    <alternativeName>
        <fullName>RNA-editing enzyme 1</fullName>
    </alternativeName>
    <alternativeName>
        <fullName>dADAR</fullName>
    </alternativeName>
    <alternativeName>
        <fullName>dsRNA adenosine deaminase</fullName>
    </alternativeName>
</protein>
<sequence length="676" mass="74978">MKFDSRVMLNSANNNSPQHPVSAPSDINMNGYNRKLPQKRGYEMPKYSDPKKKMCKERIPQPKNTVAMLNELRHGLIYKLESQTGPVHAPLFTISVEVDGQKYLGQGRSKKVARIEAAATALRSFIQFKDGAVLSPLKPAGNLDFTSDEHLENGIENLSSSKMFEIIQTMLTEKLSNPTSLEQPTFCMSQNVSKSAITVDGQKKVPDKGPVMLLYELFNDVNFECINIDGAQNNCRFKMTVTINEKKFDGTGPSKKTAKNAAAKAALASLCNISYSPMVVPQKNVPLPIDDKSSSMELPQIHADTIGRLVLEKFMEVIKGQEAYSRRKVLAGIVMTENMNFCEAKVISVSTGTKCVSGEHMSVNGAVLNDSHAEIVSRRCLLKYLYAQLDLQCNQATAYQSIFVRNTDGQYPYKLKSGVHFHLYINTAPCGDARIFSPHENDTGVDKHPNRKARGQLRTKIESGEGTIPVKSSDGIQTWDGVLQGQRLLTMSCSDKIARWNIVGIQGSLLSSIIEPVYLHSIVLGSLLHPEHMYRAVCGRIEKSIQGLPPPYHLNKPRLALVTSAEPRNQAKAPNFGINWTIGDTELEVVNSLTGRTIGGQVSRITKQAFFVKYGFLMANLPGILVRKVTTDYGQTKANVKDYQIAKLELFSAFKREDLGSWLKKPIEQDEFGLAE</sequence>
<organism>
    <name type="scientific">Drosophila melanogaster</name>
    <name type="common">Fruit fly</name>
    <dbReference type="NCBI Taxonomy" id="7227"/>
    <lineage>
        <taxon>Eukaryota</taxon>
        <taxon>Metazoa</taxon>
        <taxon>Ecdysozoa</taxon>
        <taxon>Arthropoda</taxon>
        <taxon>Hexapoda</taxon>
        <taxon>Insecta</taxon>
        <taxon>Pterygota</taxon>
        <taxon>Neoptera</taxon>
        <taxon>Endopterygota</taxon>
        <taxon>Diptera</taxon>
        <taxon>Brachycera</taxon>
        <taxon>Muscomorpha</taxon>
        <taxon>Ephydroidea</taxon>
        <taxon>Drosophilidae</taxon>
        <taxon>Drosophila</taxon>
        <taxon>Sophophora</taxon>
    </lineage>
</organism>